<name>STAR_SHEEP</name>
<sequence length="285" mass="31895">MLLATFKLCAGSSYRHVRSMKGLRQQAVLAIGQELNRRALGGPAPAAWIYQVRRRGSLLGSQLEDSLYSDQELAYIQQGEEAMQRALGILKDQEGWKKESRQVNGDEVLSKVIPDVGKVFRLEVVVDQPMERLYEELVERMEAMGEWNPSVKEIKVLQKIGKDTIITHELAAEAAGNLVGPRDFVSVRCTKRRGSMCVLAGTATLYEEMPQQKGVIRAEHGPTCMVLRPLAGSPSRTKLTWLLSIDLKGWLPKTIINQVLSQTQVDFANHLRKRLESCPALEARC</sequence>
<comment type="function">
    <text evidence="2">Plays a key role in steroid hormone synthesis by enhancing the metabolism of cholesterol into pregnenolone. Mediates the transfer of cholesterol from the outer mitochondrial membrane to the inner mitochondrial membrane where it is cleaved to pregnenolone (By similarity).</text>
</comment>
<comment type="catalytic activity">
    <reaction evidence="2">
        <text>cholesterol(in) = cholesterol(out)</text>
        <dbReference type="Rhea" id="RHEA:39747"/>
        <dbReference type="ChEBI" id="CHEBI:16113"/>
    </reaction>
</comment>
<comment type="pathway">
    <text evidence="2">Steroid metabolism; cholesterol metabolism.</text>
</comment>
<comment type="subunit">
    <text evidence="5">May interact with TSPO.</text>
</comment>
<comment type="subcellular location">
    <subcellularLocation>
        <location evidence="3">Mitochondrion</location>
    </subcellularLocation>
</comment>
<accession>P79245</accession>
<accession>Q9GMD0</accession>
<gene>
    <name type="primary">STAR</name>
</gene>
<keyword id="KW-0445">Lipid transport</keyword>
<keyword id="KW-0446">Lipid-binding</keyword>
<keyword id="KW-0496">Mitochondrion</keyword>
<keyword id="KW-0597">Phosphoprotein</keyword>
<keyword id="KW-1185">Reference proteome</keyword>
<keyword id="KW-0755">Steroidogenesis</keyword>
<keyword id="KW-0809">Transit peptide</keyword>
<keyword id="KW-0813">Transport</keyword>
<organism>
    <name type="scientific">Ovis aries</name>
    <name type="common">Sheep</name>
    <dbReference type="NCBI Taxonomy" id="9940"/>
    <lineage>
        <taxon>Eukaryota</taxon>
        <taxon>Metazoa</taxon>
        <taxon>Chordata</taxon>
        <taxon>Craniata</taxon>
        <taxon>Vertebrata</taxon>
        <taxon>Euteleostomi</taxon>
        <taxon>Mammalia</taxon>
        <taxon>Eutheria</taxon>
        <taxon>Laurasiatheria</taxon>
        <taxon>Artiodactyla</taxon>
        <taxon>Ruminantia</taxon>
        <taxon>Pecora</taxon>
        <taxon>Bovidae</taxon>
        <taxon>Caprinae</taxon>
        <taxon>Ovis</taxon>
    </lineage>
</organism>
<evidence type="ECO:0000250" key="1"/>
<evidence type="ECO:0000250" key="2">
    <source>
        <dbReference type="UniProtKB" id="P49675"/>
    </source>
</evidence>
<evidence type="ECO:0000250" key="3">
    <source>
        <dbReference type="UniProtKB" id="P51557"/>
    </source>
</evidence>
<evidence type="ECO:0000255" key="4">
    <source>
        <dbReference type="PROSITE-ProRule" id="PRU00197"/>
    </source>
</evidence>
<evidence type="ECO:0000269" key="5">
    <source>
    </source>
</evidence>
<evidence type="ECO:0000305" key="6"/>
<reference key="1">
    <citation type="journal article" date="2001" name="Endocrinology">
        <title>Steroidogenic acute regulatory protein and peripheral-type benzodiazepine receptor associate at the mitochondrial membrane.</title>
        <authorList>
            <person name="West L.A."/>
            <person name="Horvat R.D."/>
            <person name="Roess D.A."/>
            <person name="Barisas B.G."/>
            <person name="Juengel J.L."/>
            <person name="Niswender G.D."/>
        </authorList>
    </citation>
    <scope>NUCLEOTIDE SEQUENCE [MRNA]</scope>
    <scope>INTERACTION WITH TSPO</scope>
</reference>
<reference key="2">
    <citation type="journal article" date="1995" name="Endocrinology">
        <title>Hormonal regulation of messenger ribonucleic acid encoding steroidogenic acute regulatory protein in ovine corpora lutea.</title>
        <authorList>
            <person name="Juengel J.L."/>
            <person name="Meberg B.M."/>
            <person name="Turzillo A.M."/>
            <person name="Nett T.M."/>
            <person name="Niswender G.D."/>
        </authorList>
    </citation>
    <scope>NUCLEOTIDE SEQUENCE [MRNA] OF 97-217</scope>
    <source>
        <tissue>Corpus luteum</tissue>
    </source>
</reference>
<dbReference type="EMBL" id="AF290202">
    <property type="protein sequence ID" value="AAG02464.1"/>
    <property type="molecule type" value="mRNA"/>
</dbReference>
<dbReference type="EMBL" id="S80098">
    <property type="protein sequence ID" value="AAB47088.1"/>
    <property type="molecule type" value="mRNA"/>
</dbReference>
<dbReference type="RefSeq" id="NP_001009243.1">
    <property type="nucleotide sequence ID" value="NM_001009243.1"/>
</dbReference>
<dbReference type="SMR" id="P79245"/>
<dbReference type="STRING" id="9940.ENSOARP00000001315"/>
<dbReference type="PaxDb" id="9940-ENSOARP00000001315"/>
<dbReference type="Ensembl" id="ENSOART00180056368">
    <property type="protein sequence ID" value="ENSOARP00180029891"/>
    <property type="gene ID" value="ENSOARG00180033603"/>
</dbReference>
<dbReference type="Ensembl" id="ENSOART00225028464">
    <property type="protein sequence ID" value="ENSOARP00225013795"/>
    <property type="gene ID" value="ENSOARG00225017402"/>
</dbReference>
<dbReference type="GeneID" id="443122"/>
<dbReference type="KEGG" id="oas:443122"/>
<dbReference type="CTD" id="6770"/>
<dbReference type="eggNOG" id="KOG3845">
    <property type="taxonomic scope" value="Eukaryota"/>
</dbReference>
<dbReference type="OrthoDB" id="74575at2759"/>
<dbReference type="UniPathway" id="UPA00296"/>
<dbReference type="Proteomes" id="UP000002356">
    <property type="component" value="Unplaced"/>
</dbReference>
<dbReference type="GO" id="GO:0005739">
    <property type="term" value="C:mitochondrion"/>
    <property type="evidence" value="ECO:0007669"/>
    <property type="project" value="UniProtKB-SubCell"/>
</dbReference>
<dbReference type="GO" id="GO:0015485">
    <property type="term" value="F:cholesterol binding"/>
    <property type="evidence" value="ECO:0007669"/>
    <property type="project" value="InterPro"/>
</dbReference>
<dbReference type="GO" id="GO:0120020">
    <property type="term" value="F:cholesterol transfer activity"/>
    <property type="evidence" value="ECO:0007669"/>
    <property type="project" value="InterPro"/>
</dbReference>
<dbReference type="GO" id="GO:0008203">
    <property type="term" value="P:cholesterol metabolic process"/>
    <property type="evidence" value="ECO:0007669"/>
    <property type="project" value="UniProtKB-UniPathway"/>
</dbReference>
<dbReference type="GO" id="GO:0032367">
    <property type="term" value="P:intracellular cholesterol transport"/>
    <property type="evidence" value="ECO:0007669"/>
    <property type="project" value="TreeGrafter"/>
</dbReference>
<dbReference type="GO" id="GO:0050810">
    <property type="term" value="P:regulation of steroid biosynthetic process"/>
    <property type="evidence" value="ECO:0007669"/>
    <property type="project" value="TreeGrafter"/>
</dbReference>
<dbReference type="GO" id="GO:0006694">
    <property type="term" value="P:steroid biosynthetic process"/>
    <property type="evidence" value="ECO:0007669"/>
    <property type="project" value="UniProtKB-KW"/>
</dbReference>
<dbReference type="CDD" id="cd08905">
    <property type="entry name" value="START_STARD1-like"/>
    <property type="match status" value="1"/>
</dbReference>
<dbReference type="FunFam" id="3.30.530.20:FF:000015">
    <property type="entry name" value="Steroidogenic acute regulatory protein, mitochondrial"/>
    <property type="match status" value="1"/>
</dbReference>
<dbReference type="Gene3D" id="3.30.530.20">
    <property type="match status" value="1"/>
</dbReference>
<dbReference type="InterPro" id="IPR029866">
    <property type="entry name" value="StAR"/>
</dbReference>
<dbReference type="InterPro" id="IPR000799">
    <property type="entry name" value="StAR-like"/>
</dbReference>
<dbReference type="InterPro" id="IPR023393">
    <property type="entry name" value="START-like_dom_sf"/>
</dbReference>
<dbReference type="InterPro" id="IPR002913">
    <property type="entry name" value="START_lipid-bd_dom"/>
</dbReference>
<dbReference type="PANTHER" id="PTHR46489">
    <property type="entry name" value="STEROIDOGENIC ACUTE REGULATORY PROTEIN, MITOCHONDRIAL"/>
    <property type="match status" value="1"/>
</dbReference>
<dbReference type="PANTHER" id="PTHR46489:SF1">
    <property type="entry name" value="STEROIDOGENIC ACUTE REGULATORY PROTEIN, MITOCHONDRIAL"/>
    <property type="match status" value="1"/>
</dbReference>
<dbReference type="Pfam" id="PF01852">
    <property type="entry name" value="START"/>
    <property type="match status" value="1"/>
</dbReference>
<dbReference type="PRINTS" id="PR00978">
    <property type="entry name" value="STARPROTEIN"/>
</dbReference>
<dbReference type="SMART" id="SM00234">
    <property type="entry name" value="START"/>
    <property type="match status" value="1"/>
</dbReference>
<dbReference type="SUPFAM" id="SSF55961">
    <property type="entry name" value="Bet v1-like"/>
    <property type="match status" value="1"/>
</dbReference>
<dbReference type="PROSITE" id="PS50848">
    <property type="entry name" value="START"/>
    <property type="match status" value="1"/>
</dbReference>
<feature type="transit peptide" description="Mitochondrion" evidence="1">
    <location>
        <begin position="1"/>
        <end position="63"/>
    </location>
</feature>
<feature type="chain" id="PRO_0000033321" description="Steroidogenic acute regulatory protein, mitochondrial">
    <location>
        <begin position="64"/>
        <end position="285"/>
    </location>
</feature>
<feature type="domain" description="START" evidence="4">
    <location>
        <begin position="67"/>
        <end position="280"/>
    </location>
</feature>
<feature type="modified residue" description="Phosphoserine; by PKA" evidence="2">
    <location>
        <position position="57"/>
    </location>
</feature>
<feature type="modified residue" description="Phosphoserine; by PKA" evidence="2">
    <location>
        <position position="195"/>
    </location>
</feature>
<feature type="sequence conflict" description="In Ref. 2; AAB47088." evidence="6" ref="2">
    <original>S</original>
    <variation>N</variation>
    <location>
        <position position="100"/>
    </location>
</feature>
<feature type="sequence conflict" description="In Ref. 2; AAB47088." evidence="6" ref="2">
    <original>V</original>
    <variation>A</variation>
    <location>
        <position position="103"/>
    </location>
</feature>
<feature type="sequence conflict" description="In Ref. 2; AAB47088." evidence="6" ref="2">
    <original>S</original>
    <variation>R</variation>
    <location>
        <position position="186"/>
    </location>
</feature>
<protein>
    <recommendedName>
        <fullName>Steroidogenic acute regulatory protein, mitochondrial</fullName>
        <shortName>StAR</shortName>
    </recommendedName>
    <alternativeName>
        <fullName>START domain-containing protein 1</fullName>
        <shortName>StARD1</shortName>
    </alternativeName>
</protein>
<proteinExistence type="evidence at protein level"/>